<gene>
    <name type="primary">asf1</name>
    <name type="ORF">AN4891</name>
</gene>
<comment type="function">
    <text evidence="1">Histone chaperone that facilitates histone deposition and histone exchange and removal during nucleosome assembly and disassembly.</text>
</comment>
<comment type="subunit">
    <text evidence="1">Interacts with histone H3 and histone H4.</text>
</comment>
<comment type="subcellular location">
    <subcellularLocation>
        <location evidence="1">Nucleus</location>
    </subcellularLocation>
</comment>
<comment type="similarity">
    <text evidence="4">Belongs to the ASF1 family.</text>
</comment>
<comment type="sequence caution" evidence="4">
    <conflict type="erroneous gene model prediction">
        <sequence resource="EMBL-CDS" id="EAA60969"/>
    </conflict>
</comment>
<proteinExistence type="inferred from homology"/>
<sequence length="279" mass="31125">MSVVSLLGVKVLNNPAPFTSSYQFEITFECLEQLQKDLEWKLTYVGSATSSEYDQELDSLLVGPIPVGVNKFIFEADPPDLRRIPTSEILGVTVILLTCSYDGREFVRVGYYVNNEYDSEELTADPPAKPIIERIRRNILAEKPRVTRFAIKWDTEESAPAEYPPDQPEADGLDDDGAAYGQEEAELEAALLKELQEAEKNESTKGEDHDMEGADNGEEDISDAESEDIEDESDDDEDEVDEEEGNDADEDVEMGDDSEPKDDNANPAAHHSQQEVMVH</sequence>
<reference key="1">
    <citation type="journal article" date="2005" name="Nature">
        <title>Sequencing of Aspergillus nidulans and comparative analysis with A. fumigatus and A. oryzae.</title>
        <authorList>
            <person name="Galagan J.E."/>
            <person name="Calvo S.E."/>
            <person name="Cuomo C."/>
            <person name="Ma L.-J."/>
            <person name="Wortman J.R."/>
            <person name="Batzoglou S."/>
            <person name="Lee S.-I."/>
            <person name="Bastuerkmen M."/>
            <person name="Spevak C.C."/>
            <person name="Clutterbuck J."/>
            <person name="Kapitonov V."/>
            <person name="Jurka J."/>
            <person name="Scazzocchio C."/>
            <person name="Farman M.L."/>
            <person name="Butler J."/>
            <person name="Purcell S."/>
            <person name="Harris S."/>
            <person name="Braus G.H."/>
            <person name="Draht O."/>
            <person name="Busch S."/>
            <person name="D'Enfert C."/>
            <person name="Bouchier C."/>
            <person name="Goldman G.H."/>
            <person name="Bell-Pedersen D."/>
            <person name="Griffiths-Jones S."/>
            <person name="Doonan J.H."/>
            <person name="Yu J."/>
            <person name="Vienken K."/>
            <person name="Pain A."/>
            <person name="Freitag M."/>
            <person name="Selker E.U."/>
            <person name="Archer D.B."/>
            <person name="Penalva M.A."/>
            <person name="Oakley B.R."/>
            <person name="Momany M."/>
            <person name="Tanaka T."/>
            <person name="Kumagai T."/>
            <person name="Asai K."/>
            <person name="Machida M."/>
            <person name="Nierman W.C."/>
            <person name="Denning D.W."/>
            <person name="Caddick M.X."/>
            <person name="Hynes M."/>
            <person name="Paoletti M."/>
            <person name="Fischer R."/>
            <person name="Miller B.L."/>
            <person name="Dyer P.S."/>
            <person name="Sachs M.S."/>
            <person name="Osmani S.A."/>
            <person name="Birren B.W."/>
        </authorList>
    </citation>
    <scope>NUCLEOTIDE SEQUENCE [LARGE SCALE GENOMIC DNA]</scope>
    <source>
        <strain>FGSC A4 / ATCC 38163 / CBS 112.46 / NRRL 194 / M139</strain>
    </source>
</reference>
<reference key="2">
    <citation type="journal article" date="2009" name="Fungal Genet. Biol.">
        <title>The 2008 update of the Aspergillus nidulans genome annotation: a community effort.</title>
        <authorList>
            <person name="Wortman J.R."/>
            <person name="Gilsenan J.M."/>
            <person name="Joardar V."/>
            <person name="Deegan J."/>
            <person name="Clutterbuck J."/>
            <person name="Andersen M.R."/>
            <person name="Archer D."/>
            <person name="Bencina M."/>
            <person name="Braus G."/>
            <person name="Coutinho P."/>
            <person name="von Dohren H."/>
            <person name="Doonan J."/>
            <person name="Driessen A.J."/>
            <person name="Durek P."/>
            <person name="Espeso E."/>
            <person name="Fekete E."/>
            <person name="Flipphi M."/>
            <person name="Estrada C.G."/>
            <person name="Geysens S."/>
            <person name="Goldman G."/>
            <person name="de Groot P.W."/>
            <person name="Hansen K."/>
            <person name="Harris S.D."/>
            <person name="Heinekamp T."/>
            <person name="Helmstaedt K."/>
            <person name="Henrissat B."/>
            <person name="Hofmann G."/>
            <person name="Homan T."/>
            <person name="Horio T."/>
            <person name="Horiuchi H."/>
            <person name="James S."/>
            <person name="Jones M."/>
            <person name="Karaffa L."/>
            <person name="Karanyi Z."/>
            <person name="Kato M."/>
            <person name="Keller N."/>
            <person name="Kelly D.E."/>
            <person name="Kiel J.A."/>
            <person name="Kim J.M."/>
            <person name="van der Klei I.J."/>
            <person name="Klis F.M."/>
            <person name="Kovalchuk A."/>
            <person name="Krasevec N."/>
            <person name="Kubicek C.P."/>
            <person name="Liu B."/>
            <person name="Maccabe A."/>
            <person name="Meyer V."/>
            <person name="Mirabito P."/>
            <person name="Miskei M."/>
            <person name="Mos M."/>
            <person name="Mullins J."/>
            <person name="Nelson D.R."/>
            <person name="Nielsen J."/>
            <person name="Oakley B.R."/>
            <person name="Osmani S.A."/>
            <person name="Pakula T."/>
            <person name="Paszewski A."/>
            <person name="Paulsen I."/>
            <person name="Pilsyk S."/>
            <person name="Pocsi I."/>
            <person name="Punt P.J."/>
            <person name="Ram A.F."/>
            <person name="Ren Q."/>
            <person name="Robellet X."/>
            <person name="Robson G."/>
            <person name="Seiboth B."/>
            <person name="van Solingen P."/>
            <person name="Specht T."/>
            <person name="Sun J."/>
            <person name="Taheri-Talesh N."/>
            <person name="Takeshita N."/>
            <person name="Ussery D."/>
            <person name="vanKuyk P.A."/>
            <person name="Visser H."/>
            <person name="van de Vondervoort P.J."/>
            <person name="de Vries R.P."/>
            <person name="Walton J."/>
            <person name="Xiang X."/>
            <person name="Xiong Y."/>
            <person name="Zeng A.P."/>
            <person name="Brandt B.W."/>
            <person name="Cornell M.J."/>
            <person name="van den Hondel C.A."/>
            <person name="Visser J."/>
            <person name="Oliver S.G."/>
            <person name="Turner G."/>
        </authorList>
    </citation>
    <scope>GENOME REANNOTATION</scope>
    <source>
        <strain>FGSC A4 / ATCC 38163 / CBS 112.46 / NRRL 194 / M139</strain>
    </source>
</reference>
<feature type="chain" id="PRO_0000284035" description="Histone chaperone asf1">
    <location>
        <begin position="1"/>
        <end position="279"/>
    </location>
</feature>
<feature type="region of interest" description="Disordered" evidence="3">
    <location>
        <begin position="151"/>
        <end position="279"/>
    </location>
</feature>
<feature type="coiled-coil region" evidence="2">
    <location>
        <begin position="182"/>
        <end position="246"/>
    </location>
</feature>
<feature type="compositionally biased region" description="Acidic residues" evidence="3">
    <location>
        <begin position="168"/>
        <end position="187"/>
    </location>
</feature>
<feature type="compositionally biased region" description="Basic and acidic residues" evidence="3">
    <location>
        <begin position="194"/>
        <end position="212"/>
    </location>
</feature>
<feature type="compositionally biased region" description="Acidic residues" evidence="3">
    <location>
        <begin position="213"/>
        <end position="260"/>
    </location>
</feature>
<keyword id="KW-0143">Chaperone</keyword>
<keyword id="KW-0156">Chromatin regulator</keyword>
<keyword id="KW-0175">Coiled coil</keyword>
<keyword id="KW-0539">Nucleus</keyword>
<keyword id="KW-1185">Reference proteome</keyword>
<keyword id="KW-0804">Transcription</keyword>
<keyword id="KW-0805">Transcription regulation</keyword>
<dbReference type="EMBL" id="AACD01000084">
    <property type="protein sequence ID" value="EAA60969.1"/>
    <property type="status" value="ALT_SEQ"/>
    <property type="molecule type" value="Genomic_DNA"/>
</dbReference>
<dbReference type="EMBL" id="BN001303">
    <property type="protein sequence ID" value="CBF76538.1"/>
    <property type="molecule type" value="Genomic_DNA"/>
</dbReference>
<dbReference type="RefSeq" id="XP_662495.1">
    <property type="nucleotide sequence ID" value="XM_657403.1"/>
</dbReference>
<dbReference type="SMR" id="Q5B3I9"/>
<dbReference type="FunCoup" id="Q5B3I9">
    <property type="interactions" value="802"/>
</dbReference>
<dbReference type="STRING" id="227321.Q5B3I9"/>
<dbReference type="EnsemblFungi" id="CBF76538">
    <property type="protein sequence ID" value="CBF76538"/>
    <property type="gene ID" value="ANIA_04891"/>
</dbReference>
<dbReference type="KEGG" id="ani:ANIA_04891"/>
<dbReference type="VEuPathDB" id="FungiDB:AN4891"/>
<dbReference type="eggNOG" id="KOG3265">
    <property type="taxonomic scope" value="Eukaryota"/>
</dbReference>
<dbReference type="HOGENOM" id="CLU_060354_0_2_1"/>
<dbReference type="InParanoid" id="Q5B3I9"/>
<dbReference type="OMA" id="CSYDERE"/>
<dbReference type="OrthoDB" id="29755at2759"/>
<dbReference type="Proteomes" id="UP000000560">
    <property type="component" value="Chromosome III"/>
</dbReference>
<dbReference type="GO" id="GO:0000785">
    <property type="term" value="C:chromatin"/>
    <property type="evidence" value="ECO:0000318"/>
    <property type="project" value="GO_Central"/>
</dbReference>
<dbReference type="GO" id="GO:0000781">
    <property type="term" value="C:chromosome, telomeric region"/>
    <property type="evidence" value="ECO:0007669"/>
    <property type="project" value="GOC"/>
</dbReference>
<dbReference type="GO" id="GO:0005829">
    <property type="term" value="C:cytosol"/>
    <property type="evidence" value="ECO:0007669"/>
    <property type="project" value="EnsemblFungi"/>
</dbReference>
<dbReference type="GO" id="GO:0070775">
    <property type="term" value="C:H3 histone acetyltransferase complex"/>
    <property type="evidence" value="ECO:0007669"/>
    <property type="project" value="EnsemblFungi"/>
</dbReference>
<dbReference type="GO" id="GO:0005634">
    <property type="term" value="C:nucleus"/>
    <property type="evidence" value="ECO:0000318"/>
    <property type="project" value="GO_Central"/>
</dbReference>
<dbReference type="GO" id="GO:0010698">
    <property type="term" value="F:acetyltransferase activator activity"/>
    <property type="evidence" value="ECO:0007669"/>
    <property type="project" value="EnsemblFungi"/>
</dbReference>
<dbReference type="GO" id="GO:0042393">
    <property type="term" value="F:histone binding"/>
    <property type="evidence" value="ECO:0000318"/>
    <property type="project" value="GO_Central"/>
</dbReference>
<dbReference type="GO" id="GO:0033554">
    <property type="term" value="P:cellular response to stress"/>
    <property type="evidence" value="ECO:0007669"/>
    <property type="project" value="EnsemblFungi"/>
</dbReference>
<dbReference type="GO" id="GO:0006335">
    <property type="term" value="P:DNA replication-dependent chromatin assembly"/>
    <property type="evidence" value="ECO:0000318"/>
    <property type="project" value="GO_Central"/>
</dbReference>
<dbReference type="GO" id="GO:0006334">
    <property type="term" value="P:nucleosome assembly"/>
    <property type="evidence" value="ECO:0007669"/>
    <property type="project" value="InterPro"/>
</dbReference>
<dbReference type="GO" id="GO:0006337">
    <property type="term" value="P:nucleosome disassembly"/>
    <property type="evidence" value="ECO:0007669"/>
    <property type="project" value="EnsemblFungi"/>
</dbReference>
<dbReference type="GO" id="GO:0032968">
    <property type="term" value="P:positive regulation of transcription elongation by RNA polymerase II"/>
    <property type="evidence" value="ECO:0007669"/>
    <property type="project" value="EnsemblFungi"/>
</dbReference>
<dbReference type="GO" id="GO:0036211">
    <property type="term" value="P:protein modification process"/>
    <property type="evidence" value="ECO:0007669"/>
    <property type="project" value="EnsemblFungi"/>
</dbReference>
<dbReference type="GO" id="GO:0030466">
    <property type="term" value="P:silent mating-type cassette heterochromatin formation"/>
    <property type="evidence" value="ECO:0007669"/>
    <property type="project" value="EnsemblFungi"/>
</dbReference>
<dbReference type="GO" id="GO:0031509">
    <property type="term" value="P:subtelomeric heterochromatin formation"/>
    <property type="evidence" value="ECO:0007669"/>
    <property type="project" value="EnsemblFungi"/>
</dbReference>
<dbReference type="FunFam" id="2.60.40.1490:FF:000001">
    <property type="entry name" value="Histone chaperone ASF1"/>
    <property type="match status" value="1"/>
</dbReference>
<dbReference type="Gene3D" id="2.60.40.1490">
    <property type="entry name" value="Histone chaperone ASF1-like"/>
    <property type="match status" value="1"/>
</dbReference>
<dbReference type="InterPro" id="IPR006818">
    <property type="entry name" value="ASF1-like"/>
</dbReference>
<dbReference type="InterPro" id="IPR036747">
    <property type="entry name" value="ASF1-like_sf"/>
</dbReference>
<dbReference type="InterPro" id="IPR017282">
    <property type="entry name" value="Hist_deposition_Asf1"/>
</dbReference>
<dbReference type="PANTHER" id="PTHR12040">
    <property type="entry name" value="ANTI-SILENCING PROTEIN 1"/>
    <property type="match status" value="1"/>
</dbReference>
<dbReference type="PANTHER" id="PTHR12040:SF0">
    <property type="entry name" value="HISTONE CHAPERONE ASF1"/>
    <property type="match status" value="1"/>
</dbReference>
<dbReference type="Pfam" id="PF04729">
    <property type="entry name" value="ASF1_hist_chap"/>
    <property type="match status" value="1"/>
</dbReference>
<dbReference type="PIRSF" id="PIRSF037759">
    <property type="entry name" value="Histone_Asf1"/>
    <property type="match status" value="1"/>
</dbReference>
<dbReference type="SUPFAM" id="SSF101546">
    <property type="entry name" value="ASF1-like"/>
    <property type="match status" value="1"/>
</dbReference>
<organism>
    <name type="scientific">Emericella nidulans (strain FGSC A4 / ATCC 38163 / CBS 112.46 / NRRL 194 / M139)</name>
    <name type="common">Aspergillus nidulans</name>
    <dbReference type="NCBI Taxonomy" id="227321"/>
    <lineage>
        <taxon>Eukaryota</taxon>
        <taxon>Fungi</taxon>
        <taxon>Dikarya</taxon>
        <taxon>Ascomycota</taxon>
        <taxon>Pezizomycotina</taxon>
        <taxon>Eurotiomycetes</taxon>
        <taxon>Eurotiomycetidae</taxon>
        <taxon>Eurotiales</taxon>
        <taxon>Aspergillaceae</taxon>
        <taxon>Aspergillus</taxon>
        <taxon>Aspergillus subgen. Nidulantes</taxon>
    </lineage>
</organism>
<name>ASF1_EMENI</name>
<evidence type="ECO:0000250" key="1"/>
<evidence type="ECO:0000255" key="2"/>
<evidence type="ECO:0000256" key="3">
    <source>
        <dbReference type="SAM" id="MobiDB-lite"/>
    </source>
</evidence>
<evidence type="ECO:0000305" key="4"/>
<accession>Q5B3I9</accession>
<accession>C8V9S6</accession>
<protein>
    <recommendedName>
        <fullName>Histone chaperone asf1</fullName>
    </recommendedName>
    <alternativeName>
        <fullName>Anti-silencing function protein 1</fullName>
    </alternativeName>
</protein>